<dbReference type="PDB" id="2KGH">
    <property type="method" value="NMR"/>
    <property type="chains" value="A=1-39"/>
</dbReference>
<dbReference type="PDBsum" id="2KGH"/>
<dbReference type="BMRB" id="P85504"/>
<dbReference type="SMR" id="P85504"/>
<dbReference type="ArachnoServer" id="AS000401">
    <property type="toxin name" value="omega-theraphotoxin-Ba1b"/>
</dbReference>
<dbReference type="EvolutionaryTrace" id="P85504"/>
<dbReference type="GO" id="GO:0005576">
    <property type="term" value="C:extracellular region"/>
    <property type="evidence" value="ECO:0007669"/>
    <property type="project" value="UniProtKB-SubCell"/>
</dbReference>
<dbReference type="GO" id="GO:0005246">
    <property type="term" value="F:calcium channel regulator activity"/>
    <property type="evidence" value="ECO:0007669"/>
    <property type="project" value="UniProtKB-KW"/>
</dbReference>
<dbReference type="GO" id="GO:0090729">
    <property type="term" value="F:toxin activity"/>
    <property type="evidence" value="ECO:0007669"/>
    <property type="project" value="UniProtKB-KW"/>
</dbReference>
<dbReference type="InterPro" id="IPR012625">
    <property type="entry name" value="Hwtx-2-like"/>
</dbReference>
<dbReference type="Pfam" id="PF08089">
    <property type="entry name" value="Toxin_20"/>
    <property type="match status" value="1"/>
</dbReference>
<dbReference type="SUPFAM" id="SSF57059">
    <property type="entry name" value="omega toxin-like"/>
    <property type="match status" value="1"/>
</dbReference>
<dbReference type="PROSITE" id="PS60022">
    <property type="entry name" value="HWTX_2"/>
    <property type="match status" value="1"/>
</dbReference>
<protein>
    <recommendedName>
        <fullName evidence="4">Omega-theraphotoxin-Ba1b</fullName>
        <shortName evidence="4">Omega-TRTX-Ba1b</shortName>
    </recommendedName>
    <alternativeName>
        <fullName evidence="3">Ba2</fullName>
    </alternativeName>
</protein>
<reference key="1">
    <citation type="journal article" date="2009" name="Biochim. Biophys. Acta">
        <title>Insecticidal peptides from the theraposid spider Brachypelma albiceps: an NMR-based model of Ba2.</title>
        <authorList>
            <person name="Corzo G."/>
            <person name="Bernard C."/>
            <person name="Clement H."/>
            <person name="Villegas E."/>
            <person name="Bosmans F."/>
            <person name="Tytgat J."/>
            <person name="Possani L.D."/>
            <person name="Darbon H."/>
            <person name="Alagon A."/>
        </authorList>
    </citation>
    <scope>PROTEIN SEQUENCE</scope>
    <scope>FUNCTION</scope>
    <scope>SUBCELLULAR LOCATION</scope>
    <scope>MASS SPECTROMETRY</scope>
    <scope>STRUCTURE BY NMR</scope>
    <scope>DISULFIDE BONDS</scope>
    <scope>TOXIC DOSE</scope>
    <source>
        <tissue>Venom</tissue>
    </source>
</reference>
<evidence type="ECO:0000250" key="1">
    <source>
        <dbReference type="UniProtKB" id="P0DL81"/>
    </source>
</evidence>
<evidence type="ECO:0000269" key="2">
    <source>
    </source>
</evidence>
<evidence type="ECO:0000303" key="3">
    <source>
    </source>
</evidence>
<evidence type="ECO:0000305" key="4"/>
<evidence type="ECO:0000305" key="5">
    <source>
    </source>
</evidence>
<evidence type="ECO:0007744" key="6">
    <source>
        <dbReference type="PDB" id="2KGH"/>
    </source>
</evidence>
<evidence type="ECO:0007829" key="7">
    <source>
        <dbReference type="PDB" id="2KGH"/>
    </source>
</evidence>
<name>TXP2_BRAAI</name>
<accession>P85504</accession>
<keyword id="KW-0002">3D-structure</keyword>
<keyword id="KW-0108">Calcium channel impairing toxin</keyword>
<keyword id="KW-0903">Direct protein sequencing</keyword>
<keyword id="KW-1015">Disulfide bond</keyword>
<keyword id="KW-0872">Ion channel impairing toxin</keyword>
<keyword id="KW-0528">Neurotoxin</keyword>
<keyword id="KW-0964">Secreted</keyword>
<keyword id="KW-0800">Toxin</keyword>
<keyword id="KW-1218">Voltage-gated calcium channel impairing toxin</keyword>
<organism>
    <name type="scientific">Brachypelma albiceps</name>
    <name type="common">Mexican golden redrump tarantula</name>
    <name type="synonym">Brachypelma ruhnaui</name>
    <dbReference type="NCBI Taxonomy" id="503929"/>
    <lineage>
        <taxon>Eukaryota</taxon>
        <taxon>Metazoa</taxon>
        <taxon>Ecdysozoa</taxon>
        <taxon>Arthropoda</taxon>
        <taxon>Chelicerata</taxon>
        <taxon>Arachnida</taxon>
        <taxon>Araneae</taxon>
        <taxon>Mygalomorphae</taxon>
        <taxon>Theraphosidae</taxon>
        <taxon>Brachypelma</taxon>
    </lineage>
</organism>
<sequence length="39" mass="4446">IFECVFSCDIKKEGKPCKPKGEKKCTGGWRCKIKLCLKI</sequence>
<feature type="peptide" id="PRO_0000332948" description="Omega-theraphotoxin-Ba1b" evidence="2">
    <location>
        <begin position="1"/>
        <end position="39"/>
    </location>
</feature>
<feature type="disulfide bond" evidence="2 6">
    <location>
        <begin position="4"/>
        <end position="17"/>
    </location>
</feature>
<feature type="disulfide bond" evidence="2 6">
    <location>
        <begin position="8"/>
        <end position="31"/>
    </location>
</feature>
<feature type="disulfide bond" evidence="2 6">
    <location>
        <begin position="25"/>
        <end position="36"/>
    </location>
</feature>
<feature type="turn" evidence="7">
    <location>
        <begin position="10"/>
        <end position="12"/>
    </location>
</feature>
<feature type="strand" evidence="7">
    <location>
        <begin position="15"/>
        <end position="17"/>
    </location>
</feature>
<feature type="strand" evidence="7">
    <location>
        <begin position="27"/>
        <end position="32"/>
    </location>
</feature>
<feature type="strand" evidence="7">
    <location>
        <begin position="35"/>
        <end position="38"/>
    </location>
</feature>
<comment type="function">
    <text evidence="1 2">Inhibits voltage-gated calcium channels (Cav) in rat cerebellar granule cells (By similarity). Has insecticidal activity to crickets (Acheta domesticus) (PubMed:19374957). Is not toxic to mice (PubMed:19374957).</text>
</comment>
<comment type="subcellular location">
    <subcellularLocation>
        <location evidence="2">Secreted</location>
    </subcellularLocation>
</comment>
<comment type="tissue specificity">
    <text evidence="5">Expressed by the venom gland.</text>
</comment>
<comment type="mass spectrometry" mass="4440.67" method="Electrospray" evidence="2"/>
<comment type="toxic dose">
    <text evidence="2">LD(50) is 9.2 +-0.9 mg/kg in juvenile house crickets (Acheta domesticus).</text>
</comment>
<comment type="miscellaneous">
    <text evidence="2">Negative results: does not inhibit insect and mice voltage-gated sodium channels (para/tipE, Nav1.2/SCN2A, Nav1.5/SCN5A).</text>
</comment>
<comment type="similarity">
    <text evidence="4">Belongs to the neurotoxin 12 (Hwtx-2) family. 06 (TXP1) subfamily.</text>
</comment>
<proteinExistence type="evidence at protein level"/>